<dbReference type="EMBL" id="CP000606">
    <property type="protein sequence ID" value="ABO22038.1"/>
    <property type="molecule type" value="Genomic_DNA"/>
</dbReference>
<dbReference type="RefSeq" id="WP_011863974.1">
    <property type="nucleotide sequence ID" value="NC_009092.1"/>
</dbReference>
<dbReference type="SMR" id="A3Q990"/>
<dbReference type="STRING" id="323850.Shew_0166"/>
<dbReference type="KEGG" id="slo:Shew_0166"/>
<dbReference type="eggNOG" id="COG0255">
    <property type="taxonomic scope" value="Bacteria"/>
</dbReference>
<dbReference type="HOGENOM" id="CLU_158491_1_2_6"/>
<dbReference type="OrthoDB" id="9815192at2"/>
<dbReference type="Proteomes" id="UP000001558">
    <property type="component" value="Chromosome"/>
</dbReference>
<dbReference type="GO" id="GO:0022625">
    <property type="term" value="C:cytosolic large ribosomal subunit"/>
    <property type="evidence" value="ECO:0007669"/>
    <property type="project" value="TreeGrafter"/>
</dbReference>
<dbReference type="GO" id="GO:0003735">
    <property type="term" value="F:structural constituent of ribosome"/>
    <property type="evidence" value="ECO:0007669"/>
    <property type="project" value="InterPro"/>
</dbReference>
<dbReference type="GO" id="GO:0006412">
    <property type="term" value="P:translation"/>
    <property type="evidence" value="ECO:0007669"/>
    <property type="project" value="UniProtKB-UniRule"/>
</dbReference>
<dbReference type="CDD" id="cd00427">
    <property type="entry name" value="Ribosomal_L29_HIP"/>
    <property type="match status" value="1"/>
</dbReference>
<dbReference type="Gene3D" id="6.10.140.1970">
    <property type="match status" value="1"/>
</dbReference>
<dbReference type="HAMAP" id="MF_00374">
    <property type="entry name" value="Ribosomal_uL29"/>
    <property type="match status" value="1"/>
</dbReference>
<dbReference type="InterPro" id="IPR050063">
    <property type="entry name" value="Ribosomal_protein_uL29"/>
</dbReference>
<dbReference type="InterPro" id="IPR001854">
    <property type="entry name" value="Ribosomal_uL29"/>
</dbReference>
<dbReference type="InterPro" id="IPR018254">
    <property type="entry name" value="Ribosomal_uL29_CS"/>
</dbReference>
<dbReference type="InterPro" id="IPR036049">
    <property type="entry name" value="Ribosomal_uL29_sf"/>
</dbReference>
<dbReference type="NCBIfam" id="TIGR00012">
    <property type="entry name" value="L29"/>
    <property type="match status" value="1"/>
</dbReference>
<dbReference type="PANTHER" id="PTHR10916">
    <property type="entry name" value="60S RIBOSOMAL PROTEIN L35/50S RIBOSOMAL PROTEIN L29"/>
    <property type="match status" value="1"/>
</dbReference>
<dbReference type="PANTHER" id="PTHR10916:SF0">
    <property type="entry name" value="LARGE RIBOSOMAL SUBUNIT PROTEIN UL29C"/>
    <property type="match status" value="1"/>
</dbReference>
<dbReference type="Pfam" id="PF00831">
    <property type="entry name" value="Ribosomal_L29"/>
    <property type="match status" value="1"/>
</dbReference>
<dbReference type="SUPFAM" id="SSF46561">
    <property type="entry name" value="Ribosomal protein L29 (L29p)"/>
    <property type="match status" value="1"/>
</dbReference>
<dbReference type="PROSITE" id="PS00579">
    <property type="entry name" value="RIBOSOMAL_L29"/>
    <property type="match status" value="1"/>
</dbReference>
<sequence>MKASELTQKSVEELNAELLGLLREQFNLRMQHATGQLTQTHQLKIVRRNIARVKTIITSKAGA</sequence>
<evidence type="ECO:0000255" key="1">
    <source>
        <dbReference type="HAMAP-Rule" id="MF_00374"/>
    </source>
</evidence>
<evidence type="ECO:0000305" key="2"/>
<feature type="chain" id="PRO_1000007600" description="Large ribosomal subunit protein uL29">
    <location>
        <begin position="1"/>
        <end position="63"/>
    </location>
</feature>
<accession>A3Q990</accession>
<name>RL29_SHELP</name>
<reference key="1">
    <citation type="submission" date="2007-03" db="EMBL/GenBank/DDBJ databases">
        <title>Complete sequence of Shewanella loihica PV-4.</title>
        <authorList>
            <consortium name="US DOE Joint Genome Institute"/>
            <person name="Copeland A."/>
            <person name="Lucas S."/>
            <person name="Lapidus A."/>
            <person name="Barry K."/>
            <person name="Detter J.C."/>
            <person name="Glavina del Rio T."/>
            <person name="Hammon N."/>
            <person name="Israni S."/>
            <person name="Dalin E."/>
            <person name="Tice H."/>
            <person name="Pitluck S."/>
            <person name="Chain P."/>
            <person name="Malfatti S."/>
            <person name="Shin M."/>
            <person name="Vergez L."/>
            <person name="Schmutz J."/>
            <person name="Larimer F."/>
            <person name="Land M."/>
            <person name="Hauser L."/>
            <person name="Kyrpides N."/>
            <person name="Mikhailova N."/>
            <person name="Romine M.F."/>
            <person name="Serres G."/>
            <person name="Fredrickson J."/>
            <person name="Tiedje J."/>
            <person name="Richardson P."/>
        </authorList>
    </citation>
    <scope>NUCLEOTIDE SEQUENCE [LARGE SCALE GENOMIC DNA]</scope>
    <source>
        <strain>ATCC BAA-1088 / PV-4</strain>
    </source>
</reference>
<organism>
    <name type="scientific">Shewanella loihica (strain ATCC BAA-1088 / PV-4)</name>
    <dbReference type="NCBI Taxonomy" id="323850"/>
    <lineage>
        <taxon>Bacteria</taxon>
        <taxon>Pseudomonadati</taxon>
        <taxon>Pseudomonadota</taxon>
        <taxon>Gammaproteobacteria</taxon>
        <taxon>Alteromonadales</taxon>
        <taxon>Shewanellaceae</taxon>
        <taxon>Shewanella</taxon>
    </lineage>
</organism>
<gene>
    <name evidence="1" type="primary">rpmC</name>
    <name type="ordered locus">Shew_0166</name>
</gene>
<comment type="similarity">
    <text evidence="1">Belongs to the universal ribosomal protein uL29 family.</text>
</comment>
<proteinExistence type="inferred from homology"/>
<keyword id="KW-1185">Reference proteome</keyword>
<keyword id="KW-0687">Ribonucleoprotein</keyword>
<keyword id="KW-0689">Ribosomal protein</keyword>
<protein>
    <recommendedName>
        <fullName evidence="1">Large ribosomal subunit protein uL29</fullName>
    </recommendedName>
    <alternativeName>
        <fullName evidence="2">50S ribosomal protein L29</fullName>
    </alternativeName>
</protein>